<reference key="1">
    <citation type="journal article" date="2002" name="Proc. Natl. Acad. Sci. U.S.A.">
        <title>The chloroplast and mitochondrial genome sequences of the charophyte Chaetosphaeridium globosum: insights into the timing of the events that restructured organelle DNAs within the green algal lineage that led to land plants.</title>
        <authorList>
            <person name="Turmel M."/>
            <person name="Otis C."/>
            <person name="Lemieux C."/>
        </authorList>
    </citation>
    <scope>NUCLEOTIDE SEQUENCE [LARGE SCALE GENOMIC DNA]</scope>
    <source>
        <strain>M1311</strain>
    </source>
</reference>
<feature type="chain" id="PRO_0000217916" description="Photosystem II reaction center protein T">
    <location>
        <begin position="1"/>
        <end position="35"/>
    </location>
</feature>
<feature type="transmembrane region" description="Helical" evidence="1">
    <location>
        <begin position="3"/>
        <end position="23"/>
    </location>
</feature>
<name>PSBT_CHAGL</name>
<keyword id="KW-0150">Chloroplast</keyword>
<keyword id="KW-0472">Membrane</keyword>
<keyword id="KW-0602">Photosynthesis</keyword>
<keyword id="KW-0604">Photosystem II</keyword>
<keyword id="KW-0934">Plastid</keyword>
<keyword id="KW-0793">Thylakoid</keyword>
<keyword id="KW-0812">Transmembrane</keyword>
<keyword id="KW-1133">Transmembrane helix</keyword>
<organism>
    <name type="scientific">Chaetosphaeridium globosum</name>
    <name type="common">Charophycean green alga</name>
    <name type="synonym">Herposteiron globosum</name>
    <dbReference type="NCBI Taxonomy" id="96477"/>
    <lineage>
        <taxon>Eukaryota</taxon>
        <taxon>Viridiplantae</taxon>
        <taxon>Streptophyta</taxon>
        <taxon>Coleochaetophyceae</taxon>
        <taxon>Coleochaetales</taxon>
        <taxon>Chaetosphaeridiaceae</taxon>
        <taxon>Chaetosphaeridium</taxon>
    </lineage>
</organism>
<geneLocation type="chloroplast"/>
<dbReference type="EMBL" id="AF494278">
    <property type="protein sequence ID" value="AAM96551.1"/>
    <property type="molecule type" value="Genomic_DNA"/>
</dbReference>
<dbReference type="RefSeq" id="NP_683795.1">
    <property type="nucleotide sequence ID" value="NC_004115.1"/>
</dbReference>
<dbReference type="SMR" id="Q8M9Z1"/>
<dbReference type="GeneID" id="860707"/>
<dbReference type="GO" id="GO:0009535">
    <property type="term" value="C:chloroplast thylakoid membrane"/>
    <property type="evidence" value="ECO:0007669"/>
    <property type="project" value="UniProtKB-SubCell"/>
</dbReference>
<dbReference type="GO" id="GO:0009539">
    <property type="term" value="C:photosystem II reaction center"/>
    <property type="evidence" value="ECO:0007669"/>
    <property type="project" value="InterPro"/>
</dbReference>
<dbReference type="GO" id="GO:0015979">
    <property type="term" value="P:photosynthesis"/>
    <property type="evidence" value="ECO:0007669"/>
    <property type="project" value="UniProtKB-UniRule"/>
</dbReference>
<dbReference type="HAMAP" id="MF_00808">
    <property type="entry name" value="PSII_PsbT"/>
    <property type="match status" value="1"/>
</dbReference>
<dbReference type="InterPro" id="IPR001743">
    <property type="entry name" value="PSII_PsbT"/>
</dbReference>
<dbReference type="InterPro" id="IPR037268">
    <property type="entry name" value="PSII_PsbT_sf"/>
</dbReference>
<dbReference type="PANTHER" id="PTHR36411">
    <property type="match status" value="1"/>
</dbReference>
<dbReference type="PANTHER" id="PTHR36411:SF2">
    <property type="entry name" value="PHOTOSYSTEM II REACTION CENTER PROTEIN T"/>
    <property type="match status" value="1"/>
</dbReference>
<dbReference type="Pfam" id="PF01405">
    <property type="entry name" value="PsbT"/>
    <property type="match status" value="1"/>
</dbReference>
<dbReference type="SUPFAM" id="SSF161029">
    <property type="entry name" value="Photosystem II reaction center protein T, PsbT"/>
    <property type="match status" value="1"/>
</dbReference>
<protein>
    <recommendedName>
        <fullName evidence="1">Photosystem II reaction center protein T</fullName>
        <shortName evidence="1">PSII-T</shortName>
    </recommendedName>
</protein>
<evidence type="ECO:0000255" key="1">
    <source>
        <dbReference type="HAMAP-Rule" id="MF_00808"/>
    </source>
</evidence>
<gene>
    <name evidence="1" type="primary">psbT</name>
</gene>
<proteinExistence type="inferred from homology"/>
<sequence>MEALVYTFLLVGTLGIIFFAIFFREPPRVPVKDKK</sequence>
<comment type="function">
    <text evidence="1">Found at the monomer-monomer interface of the photosystem II (PS II) dimer, plays a role in assembly and dimerization of PSII. PSII is a light-driven water plastoquinone oxidoreductase, using light energy to abstract electrons from H(2)O, generating a proton gradient subsequently used for ATP formation.</text>
</comment>
<comment type="subunit">
    <text evidence="1">PSII is composed of 1 copy each of membrane proteins PsbA, PsbB, PsbC, PsbD, PsbE, PsbF, PsbH, PsbI, PsbJ, PsbK, PsbL, PsbM, PsbT, PsbY, PsbZ, Psb30/Ycf12, at least 3 peripheral proteins of the oxygen-evolving complex and a large number of cofactors. It forms dimeric complexes.</text>
</comment>
<comment type="subcellular location">
    <subcellularLocation>
        <location evidence="1">Plastid</location>
        <location evidence="1">Chloroplast thylakoid membrane</location>
        <topology evidence="1">Single-pass membrane protein</topology>
    </subcellularLocation>
</comment>
<comment type="similarity">
    <text evidence="1">Belongs to the PsbT family.</text>
</comment>
<accession>Q8M9Z1</accession>